<protein>
    <recommendedName>
        <fullName evidence="1">ATP-dependent Clp protease ATP-binding subunit ClpX</fullName>
    </recommendedName>
</protein>
<accession>A4QGA7</accession>
<sequence>MARMQESADLLKCSFCGKSQKQVKKLIAGGAVYICDECIELCNEIIEEELGQAQHDEQERNELPKPSEISAFLDTYVIGQDPAKRILSVAVYNHYKRLRASETIGRRRNDEPETELVKSNILMLGPTGSGKTFLAQTLAKLLDVPFAIADATSLTEAGYVGEDVENILLKLLQAADFDVERAQRGIIYIDEVDKISRKSENPSITRDVSGEGVQQALLKILEGTVAAIPPQGGRKHPNQDFIQLDTTNILFIVAGAFSGLEKVIADRNGKKGLGFGVEVSSKKEEADIVDIFKDVRPEDLVKFGLIPEFIGRLPVVATVSNLDQKSLVKVLTEPRNSLVKQYQRLFEMDDAVLTFTDDALEEIANQALERKTGARGLRAIMEEILVPIMYDLPDREDVGEVIINGAVARGEAEPEMLEAVAEEKTA</sequence>
<keyword id="KW-0067">ATP-binding</keyword>
<keyword id="KW-0143">Chaperone</keyword>
<keyword id="KW-0479">Metal-binding</keyword>
<keyword id="KW-0547">Nucleotide-binding</keyword>
<keyword id="KW-0862">Zinc</keyword>
<proteinExistence type="inferred from homology"/>
<name>CLPX_CORGB</name>
<evidence type="ECO:0000255" key="1">
    <source>
        <dbReference type="HAMAP-Rule" id="MF_00175"/>
    </source>
</evidence>
<evidence type="ECO:0000255" key="2">
    <source>
        <dbReference type="PROSITE-ProRule" id="PRU01250"/>
    </source>
</evidence>
<reference key="1">
    <citation type="journal article" date="2007" name="Microbiology">
        <title>Comparative analysis of the Corynebacterium glutamicum group and complete genome sequence of strain R.</title>
        <authorList>
            <person name="Yukawa H."/>
            <person name="Omumasaba C.A."/>
            <person name="Nonaka H."/>
            <person name="Kos P."/>
            <person name="Okai N."/>
            <person name="Suzuki N."/>
            <person name="Suda M."/>
            <person name="Tsuge Y."/>
            <person name="Watanabe J."/>
            <person name="Ikeda Y."/>
            <person name="Vertes A.A."/>
            <person name="Inui M."/>
        </authorList>
    </citation>
    <scope>NUCLEOTIDE SEQUENCE [LARGE SCALE GENOMIC DNA]</scope>
    <source>
        <strain>R</strain>
    </source>
</reference>
<organism>
    <name type="scientific">Corynebacterium glutamicum (strain R)</name>
    <dbReference type="NCBI Taxonomy" id="340322"/>
    <lineage>
        <taxon>Bacteria</taxon>
        <taxon>Bacillati</taxon>
        <taxon>Actinomycetota</taxon>
        <taxon>Actinomycetes</taxon>
        <taxon>Mycobacteriales</taxon>
        <taxon>Corynebacteriaceae</taxon>
        <taxon>Corynebacterium</taxon>
    </lineage>
</organism>
<gene>
    <name evidence="1" type="primary">clpX</name>
    <name type="ordered locus">cgR_2269</name>
</gene>
<dbReference type="EMBL" id="AP009044">
    <property type="protein sequence ID" value="BAF55273.1"/>
    <property type="molecule type" value="Genomic_DNA"/>
</dbReference>
<dbReference type="RefSeq" id="WP_004567642.1">
    <property type="nucleotide sequence ID" value="NC_009342.1"/>
</dbReference>
<dbReference type="SMR" id="A4QGA7"/>
<dbReference type="KEGG" id="cgt:cgR_2269"/>
<dbReference type="HOGENOM" id="CLU_014218_8_2_11"/>
<dbReference type="PhylomeDB" id="A4QGA7"/>
<dbReference type="Proteomes" id="UP000006698">
    <property type="component" value="Chromosome"/>
</dbReference>
<dbReference type="GO" id="GO:0009376">
    <property type="term" value="C:HslUV protease complex"/>
    <property type="evidence" value="ECO:0007669"/>
    <property type="project" value="TreeGrafter"/>
</dbReference>
<dbReference type="GO" id="GO:0005524">
    <property type="term" value="F:ATP binding"/>
    <property type="evidence" value="ECO:0007669"/>
    <property type="project" value="UniProtKB-UniRule"/>
</dbReference>
<dbReference type="GO" id="GO:0016887">
    <property type="term" value="F:ATP hydrolysis activity"/>
    <property type="evidence" value="ECO:0007669"/>
    <property type="project" value="InterPro"/>
</dbReference>
<dbReference type="GO" id="GO:0140662">
    <property type="term" value="F:ATP-dependent protein folding chaperone"/>
    <property type="evidence" value="ECO:0007669"/>
    <property type="project" value="InterPro"/>
</dbReference>
<dbReference type="GO" id="GO:0046983">
    <property type="term" value="F:protein dimerization activity"/>
    <property type="evidence" value="ECO:0007669"/>
    <property type="project" value="InterPro"/>
</dbReference>
<dbReference type="GO" id="GO:0051082">
    <property type="term" value="F:unfolded protein binding"/>
    <property type="evidence" value="ECO:0007669"/>
    <property type="project" value="UniProtKB-UniRule"/>
</dbReference>
<dbReference type="GO" id="GO:0008270">
    <property type="term" value="F:zinc ion binding"/>
    <property type="evidence" value="ECO:0007669"/>
    <property type="project" value="InterPro"/>
</dbReference>
<dbReference type="GO" id="GO:0051301">
    <property type="term" value="P:cell division"/>
    <property type="evidence" value="ECO:0007669"/>
    <property type="project" value="TreeGrafter"/>
</dbReference>
<dbReference type="GO" id="GO:0051603">
    <property type="term" value="P:proteolysis involved in protein catabolic process"/>
    <property type="evidence" value="ECO:0007669"/>
    <property type="project" value="TreeGrafter"/>
</dbReference>
<dbReference type="CDD" id="cd19497">
    <property type="entry name" value="RecA-like_ClpX"/>
    <property type="match status" value="1"/>
</dbReference>
<dbReference type="FunFam" id="1.10.8.60:FF:000002">
    <property type="entry name" value="ATP-dependent Clp protease ATP-binding subunit ClpX"/>
    <property type="match status" value="1"/>
</dbReference>
<dbReference type="FunFam" id="3.40.50.300:FF:000005">
    <property type="entry name" value="ATP-dependent Clp protease ATP-binding subunit ClpX"/>
    <property type="match status" value="1"/>
</dbReference>
<dbReference type="Gene3D" id="1.10.8.60">
    <property type="match status" value="1"/>
</dbReference>
<dbReference type="Gene3D" id="6.20.220.10">
    <property type="entry name" value="ClpX chaperone, C4-type zinc finger domain"/>
    <property type="match status" value="1"/>
</dbReference>
<dbReference type="Gene3D" id="3.40.50.300">
    <property type="entry name" value="P-loop containing nucleotide triphosphate hydrolases"/>
    <property type="match status" value="1"/>
</dbReference>
<dbReference type="HAMAP" id="MF_00175">
    <property type="entry name" value="ClpX"/>
    <property type="match status" value="1"/>
</dbReference>
<dbReference type="InterPro" id="IPR003593">
    <property type="entry name" value="AAA+_ATPase"/>
</dbReference>
<dbReference type="InterPro" id="IPR050052">
    <property type="entry name" value="ATP-dep_Clp_protease_ClpX"/>
</dbReference>
<dbReference type="InterPro" id="IPR003959">
    <property type="entry name" value="ATPase_AAA_core"/>
</dbReference>
<dbReference type="InterPro" id="IPR019489">
    <property type="entry name" value="Clp_ATPase_C"/>
</dbReference>
<dbReference type="InterPro" id="IPR004487">
    <property type="entry name" value="Clp_protease_ATP-bd_su_ClpX"/>
</dbReference>
<dbReference type="InterPro" id="IPR046425">
    <property type="entry name" value="ClpX_bact"/>
</dbReference>
<dbReference type="InterPro" id="IPR027417">
    <property type="entry name" value="P-loop_NTPase"/>
</dbReference>
<dbReference type="InterPro" id="IPR010603">
    <property type="entry name" value="Znf_CppX_C4"/>
</dbReference>
<dbReference type="InterPro" id="IPR038366">
    <property type="entry name" value="Znf_CppX_C4_sf"/>
</dbReference>
<dbReference type="NCBIfam" id="TIGR00382">
    <property type="entry name" value="clpX"/>
    <property type="match status" value="1"/>
</dbReference>
<dbReference type="NCBIfam" id="NF003745">
    <property type="entry name" value="PRK05342.1"/>
    <property type="match status" value="1"/>
</dbReference>
<dbReference type="PANTHER" id="PTHR48102:SF7">
    <property type="entry name" value="ATP-DEPENDENT CLP PROTEASE ATP-BINDING SUBUNIT CLPX-LIKE, MITOCHONDRIAL"/>
    <property type="match status" value="1"/>
</dbReference>
<dbReference type="PANTHER" id="PTHR48102">
    <property type="entry name" value="ATP-DEPENDENT CLP PROTEASE ATP-BINDING SUBUNIT CLPX-LIKE, MITOCHONDRIAL-RELATED"/>
    <property type="match status" value="1"/>
</dbReference>
<dbReference type="Pfam" id="PF07724">
    <property type="entry name" value="AAA_2"/>
    <property type="match status" value="1"/>
</dbReference>
<dbReference type="Pfam" id="PF10431">
    <property type="entry name" value="ClpB_D2-small"/>
    <property type="match status" value="1"/>
</dbReference>
<dbReference type="Pfam" id="PF06689">
    <property type="entry name" value="zf-C4_ClpX"/>
    <property type="match status" value="1"/>
</dbReference>
<dbReference type="SMART" id="SM00382">
    <property type="entry name" value="AAA"/>
    <property type="match status" value="1"/>
</dbReference>
<dbReference type="SMART" id="SM01086">
    <property type="entry name" value="ClpB_D2-small"/>
    <property type="match status" value="1"/>
</dbReference>
<dbReference type="SMART" id="SM00994">
    <property type="entry name" value="zf-C4_ClpX"/>
    <property type="match status" value="1"/>
</dbReference>
<dbReference type="SUPFAM" id="SSF57716">
    <property type="entry name" value="Glucocorticoid receptor-like (DNA-binding domain)"/>
    <property type="match status" value="1"/>
</dbReference>
<dbReference type="SUPFAM" id="SSF52540">
    <property type="entry name" value="P-loop containing nucleoside triphosphate hydrolases"/>
    <property type="match status" value="1"/>
</dbReference>
<dbReference type="PROSITE" id="PS51902">
    <property type="entry name" value="CLPX_ZB"/>
    <property type="match status" value="1"/>
</dbReference>
<feature type="chain" id="PRO_1000024547" description="ATP-dependent Clp protease ATP-binding subunit ClpX">
    <location>
        <begin position="1"/>
        <end position="426"/>
    </location>
</feature>
<feature type="domain" description="ClpX-type ZB" evidence="2">
    <location>
        <begin position="1"/>
        <end position="54"/>
    </location>
</feature>
<feature type="binding site" evidence="2">
    <location>
        <position position="13"/>
    </location>
    <ligand>
        <name>Zn(2+)</name>
        <dbReference type="ChEBI" id="CHEBI:29105"/>
    </ligand>
</feature>
<feature type="binding site" evidence="2">
    <location>
        <position position="16"/>
    </location>
    <ligand>
        <name>Zn(2+)</name>
        <dbReference type="ChEBI" id="CHEBI:29105"/>
    </ligand>
</feature>
<feature type="binding site" evidence="2">
    <location>
        <position position="35"/>
    </location>
    <ligand>
        <name>Zn(2+)</name>
        <dbReference type="ChEBI" id="CHEBI:29105"/>
    </ligand>
</feature>
<feature type="binding site" evidence="2">
    <location>
        <position position="38"/>
    </location>
    <ligand>
        <name>Zn(2+)</name>
        <dbReference type="ChEBI" id="CHEBI:29105"/>
    </ligand>
</feature>
<feature type="binding site" evidence="1">
    <location>
        <begin position="126"/>
        <end position="133"/>
    </location>
    <ligand>
        <name>ATP</name>
        <dbReference type="ChEBI" id="CHEBI:30616"/>
    </ligand>
</feature>
<comment type="function">
    <text evidence="1">ATP-dependent specificity component of the Clp protease. It directs the protease to specific substrates. Can perform chaperone functions in the absence of ClpP.</text>
</comment>
<comment type="subunit">
    <text evidence="1">Component of the ClpX-ClpP complex. Forms a hexameric ring that, in the presence of ATP, binds to fourteen ClpP subunits assembled into a disk-like structure with a central cavity, resembling the structure of eukaryotic proteasomes.</text>
</comment>
<comment type="similarity">
    <text evidence="1">Belongs to the ClpX chaperone family.</text>
</comment>